<proteinExistence type="inferred from homology"/>
<sequence length="234" mass="26174">MLRFSDVKYRYYTDLFEFDLNVEQGSVVAILGPSGAGKSTLLSLLAGFIEPESGDITINNESQLSLAPHQRPLSMLFQEHNLFAHLSVAENIGLGIKPNLRLNEKDKKRINDAARQVGVDDLLQRLPEQLSGGQKQRVALARCLVQQKPVLLLDEPFSALDPILREEMIVLIQALIKSEKLTVLMVTHSLQDAKALASHYAFICQQKVLSQGRISELFTQEKPPELTQYLQAVK</sequence>
<gene>
    <name evidence="1" type="primary">thiQ</name>
    <name type="ordered locus">VF_0269</name>
</gene>
<organism>
    <name type="scientific">Aliivibrio fischeri (strain ATCC 700601 / ES114)</name>
    <name type="common">Vibrio fischeri</name>
    <dbReference type="NCBI Taxonomy" id="312309"/>
    <lineage>
        <taxon>Bacteria</taxon>
        <taxon>Pseudomonadati</taxon>
        <taxon>Pseudomonadota</taxon>
        <taxon>Gammaproteobacteria</taxon>
        <taxon>Vibrionales</taxon>
        <taxon>Vibrionaceae</taxon>
        <taxon>Aliivibrio</taxon>
    </lineage>
</organism>
<accession>Q5E882</accession>
<evidence type="ECO:0000255" key="1">
    <source>
        <dbReference type="HAMAP-Rule" id="MF_01723"/>
    </source>
</evidence>
<comment type="function">
    <text evidence="1">Part of the ABC transporter complex ThiBPQ involved in thiamine import. Responsible for energy coupling to the transport system.</text>
</comment>
<comment type="catalytic activity">
    <reaction evidence="1">
        <text>thiamine(out) + ATP + H2O = thiamine(in) + ADP + phosphate + H(+)</text>
        <dbReference type="Rhea" id="RHEA:29811"/>
        <dbReference type="ChEBI" id="CHEBI:15377"/>
        <dbReference type="ChEBI" id="CHEBI:15378"/>
        <dbReference type="ChEBI" id="CHEBI:18385"/>
        <dbReference type="ChEBI" id="CHEBI:30616"/>
        <dbReference type="ChEBI" id="CHEBI:43474"/>
        <dbReference type="ChEBI" id="CHEBI:456216"/>
        <dbReference type="EC" id="7.6.2.15"/>
    </reaction>
</comment>
<comment type="subunit">
    <text evidence="1">The complex is composed of two ATP-binding proteins (ThiQ), two transmembrane proteins (ThiP) and a solute-binding protein (ThiB).</text>
</comment>
<comment type="subcellular location">
    <subcellularLocation>
        <location evidence="1">Cell inner membrane</location>
        <topology evidence="1">Peripheral membrane protein</topology>
    </subcellularLocation>
</comment>
<comment type="similarity">
    <text evidence="1">Belongs to the ABC transporter superfamily. Thiamine importer (TC 3.A.1.19.1) family.</text>
</comment>
<feature type="chain" id="PRO_0000274466" description="Thiamine import ATP-binding protein ThiQ">
    <location>
        <begin position="1"/>
        <end position="234"/>
    </location>
</feature>
<feature type="domain" description="ABC transporter" evidence="1">
    <location>
        <begin position="2"/>
        <end position="230"/>
    </location>
</feature>
<feature type="binding site" evidence="1">
    <location>
        <begin position="32"/>
        <end position="39"/>
    </location>
    <ligand>
        <name>ATP</name>
        <dbReference type="ChEBI" id="CHEBI:30616"/>
    </ligand>
</feature>
<reference key="1">
    <citation type="journal article" date="2005" name="Proc. Natl. Acad. Sci. U.S.A.">
        <title>Complete genome sequence of Vibrio fischeri: a symbiotic bacterium with pathogenic congeners.</title>
        <authorList>
            <person name="Ruby E.G."/>
            <person name="Urbanowski M."/>
            <person name="Campbell J."/>
            <person name="Dunn A."/>
            <person name="Faini M."/>
            <person name="Gunsalus R."/>
            <person name="Lostroh P."/>
            <person name="Lupp C."/>
            <person name="McCann J."/>
            <person name="Millikan D."/>
            <person name="Schaefer A."/>
            <person name="Stabb E."/>
            <person name="Stevens A."/>
            <person name="Visick K."/>
            <person name="Whistler C."/>
            <person name="Greenberg E.P."/>
        </authorList>
    </citation>
    <scope>NUCLEOTIDE SEQUENCE [LARGE SCALE GENOMIC DNA]</scope>
    <source>
        <strain>ATCC 700601 / ES114</strain>
    </source>
</reference>
<keyword id="KW-0067">ATP-binding</keyword>
<keyword id="KW-0997">Cell inner membrane</keyword>
<keyword id="KW-1003">Cell membrane</keyword>
<keyword id="KW-0472">Membrane</keyword>
<keyword id="KW-0547">Nucleotide-binding</keyword>
<keyword id="KW-1185">Reference proteome</keyword>
<keyword id="KW-1278">Translocase</keyword>
<keyword id="KW-0813">Transport</keyword>
<name>THIQ_ALIF1</name>
<protein>
    <recommendedName>
        <fullName evidence="1">Thiamine import ATP-binding protein ThiQ</fullName>
        <ecNumber evidence="1">7.6.2.15</ecNumber>
    </recommendedName>
</protein>
<dbReference type="EC" id="7.6.2.15" evidence="1"/>
<dbReference type="EMBL" id="CP000020">
    <property type="protein sequence ID" value="AAW84764.1"/>
    <property type="molecule type" value="Genomic_DNA"/>
</dbReference>
<dbReference type="RefSeq" id="WP_011261087.1">
    <property type="nucleotide sequence ID" value="NC_006840.2"/>
</dbReference>
<dbReference type="RefSeq" id="YP_203652.1">
    <property type="nucleotide sequence ID" value="NC_006840.2"/>
</dbReference>
<dbReference type="SMR" id="Q5E882"/>
<dbReference type="STRING" id="312309.VF_0269"/>
<dbReference type="EnsemblBacteria" id="AAW84764">
    <property type="protein sequence ID" value="AAW84764"/>
    <property type="gene ID" value="VF_0269"/>
</dbReference>
<dbReference type="GeneID" id="54162890"/>
<dbReference type="KEGG" id="vfi:VF_0269"/>
<dbReference type="PATRIC" id="fig|312309.11.peg.264"/>
<dbReference type="eggNOG" id="COG3840">
    <property type="taxonomic scope" value="Bacteria"/>
</dbReference>
<dbReference type="HOGENOM" id="CLU_000604_1_22_6"/>
<dbReference type="OrthoDB" id="9802264at2"/>
<dbReference type="Proteomes" id="UP000000537">
    <property type="component" value="Chromosome I"/>
</dbReference>
<dbReference type="GO" id="GO:0005886">
    <property type="term" value="C:plasma membrane"/>
    <property type="evidence" value="ECO:0007669"/>
    <property type="project" value="UniProtKB-SubCell"/>
</dbReference>
<dbReference type="GO" id="GO:0048502">
    <property type="term" value="F:ABC-type thiamine transporter activity"/>
    <property type="evidence" value="ECO:0007669"/>
    <property type="project" value="UniProtKB-EC"/>
</dbReference>
<dbReference type="GO" id="GO:0005524">
    <property type="term" value="F:ATP binding"/>
    <property type="evidence" value="ECO:0007669"/>
    <property type="project" value="UniProtKB-KW"/>
</dbReference>
<dbReference type="GO" id="GO:0016887">
    <property type="term" value="F:ATP hydrolysis activity"/>
    <property type="evidence" value="ECO:0007669"/>
    <property type="project" value="InterPro"/>
</dbReference>
<dbReference type="Gene3D" id="3.40.50.300">
    <property type="entry name" value="P-loop containing nucleotide triphosphate hydrolases"/>
    <property type="match status" value="1"/>
</dbReference>
<dbReference type="InterPro" id="IPR003593">
    <property type="entry name" value="AAA+_ATPase"/>
</dbReference>
<dbReference type="InterPro" id="IPR050093">
    <property type="entry name" value="ABC_SmlMolc_Importer"/>
</dbReference>
<dbReference type="InterPro" id="IPR003439">
    <property type="entry name" value="ABC_transporter-like_ATP-bd"/>
</dbReference>
<dbReference type="InterPro" id="IPR017871">
    <property type="entry name" value="ABC_transporter-like_CS"/>
</dbReference>
<dbReference type="InterPro" id="IPR027417">
    <property type="entry name" value="P-loop_NTPase"/>
</dbReference>
<dbReference type="InterPro" id="IPR005968">
    <property type="entry name" value="Thiamine_ABC_ThiQ"/>
</dbReference>
<dbReference type="NCBIfam" id="NF008039">
    <property type="entry name" value="PRK10771.1"/>
    <property type="match status" value="1"/>
</dbReference>
<dbReference type="NCBIfam" id="TIGR01277">
    <property type="entry name" value="thiQ"/>
    <property type="match status" value="1"/>
</dbReference>
<dbReference type="PANTHER" id="PTHR42781">
    <property type="entry name" value="SPERMIDINE/PUTRESCINE IMPORT ATP-BINDING PROTEIN POTA"/>
    <property type="match status" value="1"/>
</dbReference>
<dbReference type="PANTHER" id="PTHR42781:SF1">
    <property type="entry name" value="THIAMINE IMPORT ATP-BINDING PROTEIN THIQ"/>
    <property type="match status" value="1"/>
</dbReference>
<dbReference type="Pfam" id="PF00005">
    <property type="entry name" value="ABC_tran"/>
    <property type="match status" value="1"/>
</dbReference>
<dbReference type="SMART" id="SM00382">
    <property type="entry name" value="AAA"/>
    <property type="match status" value="1"/>
</dbReference>
<dbReference type="SUPFAM" id="SSF52540">
    <property type="entry name" value="P-loop containing nucleoside triphosphate hydrolases"/>
    <property type="match status" value="1"/>
</dbReference>
<dbReference type="PROSITE" id="PS00211">
    <property type="entry name" value="ABC_TRANSPORTER_1"/>
    <property type="match status" value="1"/>
</dbReference>
<dbReference type="PROSITE" id="PS50893">
    <property type="entry name" value="ABC_TRANSPORTER_2"/>
    <property type="match status" value="1"/>
</dbReference>
<dbReference type="PROSITE" id="PS51288">
    <property type="entry name" value="THIQ"/>
    <property type="match status" value="1"/>
</dbReference>